<accession>Q88CB2</accession>
<protein>
    <recommendedName>
        <fullName evidence="4">Alanine racemase, catabolic</fullName>
        <ecNumber evidence="1 2">5.1.1.1</ecNumber>
    </recommendedName>
</protein>
<comment type="function">
    <text evidence="2">Isomerizes L-alanine to D-alanine which is then likely oxidized to pyruvate by DadA. Shows racemase activity with both alanine stereoisomers, negligible activity with D-cysteine and L-serine, and exhibits no activity with the remaining natural chiral amino acids.</text>
</comment>
<comment type="catalytic activity">
    <reaction evidence="1 2">
        <text>L-alanine = D-alanine</text>
        <dbReference type="Rhea" id="RHEA:20249"/>
        <dbReference type="ChEBI" id="CHEBI:57416"/>
        <dbReference type="ChEBI" id="CHEBI:57972"/>
        <dbReference type="EC" id="5.1.1.1"/>
    </reaction>
</comment>
<comment type="cofactor">
    <cofactor evidence="1">
        <name>pyridoxal 5'-phosphate</name>
        <dbReference type="ChEBI" id="CHEBI:597326"/>
    </cofactor>
</comment>
<comment type="biophysicochemical properties">
    <kinetics>
        <KM evidence="2">7.73 mM for D-alanine</KM>
        <KM evidence="2">24.57 mM for L-alanine</KM>
        <text evidence="2">kcat is 37.47 sec(-1) with D-alanine as substrate. kcat is 92.0 sec(-1) with L-alanine as substrate.</text>
    </kinetics>
</comment>
<comment type="pathway">
    <text evidence="1">Amino-acid biosynthesis; D-alanine biosynthesis; D-alanine from L-alanine: step 1/1.</text>
</comment>
<comment type="similarity">
    <text evidence="1">Belongs to the alanine racemase family.</text>
</comment>
<gene>
    <name evidence="3 5" type="primary">dadX</name>
    <name evidence="5" type="ordered locus">PP_5269</name>
</gene>
<name>DADX_PSEPK</name>
<sequence>MRPARALIDLQALRHNYRLARELTGAKALAVIKADAYGHGAVRCALALEAEADGFAVACIEEALELRAAGIKAPVLLLEGFFEASELALIAEHDLWCVVHSLWQLEAIEKTPLHKPLNVWLKLDSGMHRVGLHPKDYHDAYQRLLASGKVSRIVLMTHFARADELDADATSQQIAVFEAARQGLAAECSLRNSPGVLGWPQAPSDWVRPGLMLYGATPFEVAQAEAARLQPVMTLQSRVISVRELPAGEPVGYGAKFVSPRPTRVGVVAMGYADGYPRQAPNGTPVLVAGKRTQLIGRVSMDMLSIDLTDVPQATVGSPVEFWGKQVLASEVAAHAGTIPYQIFCNLKRVPRDYIGE</sequence>
<feature type="chain" id="PRO_0000446938" description="Alanine racemase, catabolic">
    <location>
        <begin position="1"/>
        <end position="357"/>
    </location>
</feature>
<feature type="active site" description="Proton acceptor; specific for D-alanine" evidence="1">
    <location>
        <position position="33"/>
    </location>
</feature>
<feature type="active site" description="Proton acceptor; specific for L-alanine" evidence="1">
    <location>
        <position position="253"/>
    </location>
</feature>
<feature type="binding site" evidence="1">
    <location>
        <position position="129"/>
    </location>
    <ligand>
        <name>substrate</name>
    </ligand>
</feature>
<feature type="binding site" evidence="1">
    <location>
        <position position="301"/>
    </location>
    <ligand>
        <name>substrate</name>
    </ligand>
</feature>
<feature type="modified residue" description="N6-(pyridoxal phosphate)lysine" evidence="1">
    <location>
        <position position="33"/>
    </location>
</feature>
<proteinExistence type="evidence at protein level"/>
<keyword id="KW-0413">Isomerase</keyword>
<keyword id="KW-0663">Pyridoxal phosphate</keyword>
<keyword id="KW-1185">Reference proteome</keyword>
<dbReference type="EC" id="5.1.1.1" evidence="1 2"/>
<dbReference type="EMBL" id="AE015451">
    <property type="protein sequence ID" value="AAN70834.1"/>
    <property type="molecule type" value="Genomic_DNA"/>
</dbReference>
<dbReference type="RefSeq" id="NP_747370.1">
    <property type="nucleotide sequence ID" value="NC_002947.4"/>
</dbReference>
<dbReference type="SMR" id="Q88CB2"/>
<dbReference type="STRING" id="160488.PP_5269"/>
<dbReference type="PaxDb" id="160488-PP_5269"/>
<dbReference type="KEGG" id="ppu:PP_5269"/>
<dbReference type="PATRIC" id="fig|160488.4.peg.5622"/>
<dbReference type="eggNOG" id="COG0787">
    <property type="taxonomic scope" value="Bacteria"/>
</dbReference>
<dbReference type="HOGENOM" id="CLU_028393_1_0_6"/>
<dbReference type="OrthoDB" id="9813814at2"/>
<dbReference type="PhylomeDB" id="Q88CB2"/>
<dbReference type="BioCyc" id="MetaCyc:G1G01-5627-MONOMER"/>
<dbReference type="BioCyc" id="PPUT160488:G1G01-5627-MONOMER"/>
<dbReference type="UniPathway" id="UPA00042">
    <property type="reaction ID" value="UER00497"/>
</dbReference>
<dbReference type="Proteomes" id="UP000000556">
    <property type="component" value="Chromosome"/>
</dbReference>
<dbReference type="GO" id="GO:0005829">
    <property type="term" value="C:cytosol"/>
    <property type="evidence" value="ECO:0007669"/>
    <property type="project" value="TreeGrafter"/>
</dbReference>
<dbReference type="GO" id="GO:0008784">
    <property type="term" value="F:alanine racemase activity"/>
    <property type="evidence" value="ECO:0007669"/>
    <property type="project" value="UniProtKB-UniRule"/>
</dbReference>
<dbReference type="GO" id="GO:0030170">
    <property type="term" value="F:pyridoxal phosphate binding"/>
    <property type="evidence" value="ECO:0007669"/>
    <property type="project" value="UniProtKB-UniRule"/>
</dbReference>
<dbReference type="GO" id="GO:0030632">
    <property type="term" value="P:D-alanine biosynthetic process"/>
    <property type="evidence" value="ECO:0007669"/>
    <property type="project" value="UniProtKB-UniRule"/>
</dbReference>
<dbReference type="CDD" id="cd06827">
    <property type="entry name" value="PLPDE_III_AR_proteobact"/>
    <property type="match status" value="1"/>
</dbReference>
<dbReference type="FunFam" id="2.40.37.10:FF:000002">
    <property type="entry name" value="Alanine racemase"/>
    <property type="match status" value="1"/>
</dbReference>
<dbReference type="FunFam" id="3.20.20.10:FF:000002">
    <property type="entry name" value="Alanine racemase"/>
    <property type="match status" value="1"/>
</dbReference>
<dbReference type="Gene3D" id="3.20.20.10">
    <property type="entry name" value="Alanine racemase"/>
    <property type="match status" value="1"/>
</dbReference>
<dbReference type="Gene3D" id="2.40.37.10">
    <property type="entry name" value="Lyase, Ornithine Decarboxylase, Chain A, domain 1"/>
    <property type="match status" value="1"/>
</dbReference>
<dbReference type="HAMAP" id="MF_01201">
    <property type="entry name" value="Ala_racemase"/>
    <property type="match status" value="1"/>
</dbReference>
<dbReference type="InterPro" id="IPR000821">
    <property type="entry name" value="Ala_racemase"/>
</dbReference>
<dbReference type="InterPro" id="IPR009006">
    <property type="entry name" value="Ala_racemase/Decarboxylase_C"/>
</dbReference>
<dbReference type="InterPro" id="IPR011079">
    <property type="entry name" value="Ala_racemase_C"/>
</dbReference>
<dbReference type="InterPro" id="IPR001608">
    <property type="entry name" value="Ala_racemase_N"/>
</dbReference>
<dbReference type="InterPro" id="IPR020622">
    <property type="entry name" value="Ala_racemase_pyridoxalP-BS"/>
</dbReference>
<dbReference type="InterPro" id="IPR029066">
    <property type="entry name" value="PLP-binding_barrel"/>
</dbReference>
<dbReference type="NCBIfam" id="TIGR00492">
    <property type="entry name" value="alr"/>
    <property type="match status" value="1"/>
</dbReference>
<dbReference type="PANTHER" id="PTHR30511">
    <property type="entry name" value="ALANINE RACEMASE"/>
    <property type="match status" value="1"/>
</dbReference>
<dbReference type="PANTHER" id="PTHR30511:SF0">
    <property type="entry name" value="ALANINE RACEMASE, CATABOLIC-RELATED"/>
    <property type="match status" value="1"/>
</dbReference>
<dbReference type="Pfam" id="PF00842">
    <property type="entry name" value="Ala_racemase_C"/>
    <property type="match status" value="1"/>
</dbReference>
<dbReference type="Pfam" id="PF01168">
    <property type="entry name" value="Ala_racemase_N"/>
    <property type="match status" value="1"/>
</dbReference>
<dbReference type="PRINTS" id="PR00992">
    <property type="entry name" value="ALARACEMASE"/>
</dbReference>
<dbReference type="SMART" id="SM01005">
    <property type="entry name" value="Ala_racemase_C"/>
    <property type="match status" value="1"/>
</dbReference>
<dbReference type="SUPFAM" id="SSF50621">
    <property type="entry name" value="Alanine racemase C-terminal domain-like"/>
    <property type="match status" value="1"/>
</dbReference>
<dbReference type="SUPFAM" id="SSF51419">
    <property type="entry name" value="PLP-binding barrel"/>
    <property type="match status" value="1"/>
</dbReference>
<dbReference type="PROSITE" id="PS00395">
    <property type="entry name" value="ALANINE_RACEMASE"/>
    <property type="match status" value="1"/>
</dbReference>
<evidence type="ECO:0000255" key="1">
    <source>
        <dbReference type="HAMAP-Rule" id="MF_01201"/>
    </source>
</evidence>
<evidence type="ECO:0000269" key="2">
    <source>
    </source>
</evidence>
<evidence type="ECO:0000303" key="3">
    <source>
    </source>
</evidence>
<evidence type="ECO:0000305" key="4">
    <source>
    </source>
</evidence>
<evidence type="ECO:0000312" key="5">
    <source>
        <dbReference type="EMBL" id="AAN70834.1"/>
    </source>
</evidence>
<organism>
    <name type="scientific">Pseudomonas putida (strain ATCC 47054 / DSM 6125 / CFBP 8728 / NCIMB 11950 / KT2440)</name>
    <dbReference type="NCBI Taxonomy" id="160488"/>
    <lineage>
        <taxon>Bacteria</taxon>
        <taxon>Pseudomonadati</taxon>
        <taxon>Pseudomonadota</taxon>
        <taxon>Gammaproteobacteria</taxon>
        <taxon>Pseudomonadales</taxon>
        <taxon>Pseudomonadaceae</taxon>
        <taxon>Pseudomonas</taxon>
    </lineage>
</organism>
<reference key="1">
    <citation type="journal article" date="2002" name="Environ. Microbiol.">
        <title>Complete genome sequence and comparative analysis of the metabolically versatile Pseudomonas putida KT2440.</title>
        <authorList>
            <person name="Nelson K.E."/>
            <person name="Weinel C."/>
            <person name="Paulsen I.T."/>
            <person name="Dodson R.J."/>
            <person name="Hilbert H."/>
            <person name="Martins dos Santos V.A.P."/>
            <person name="Fouts D.E."/>
            <person name="Gill S.R."/>
            <person name="Pop M."/>
            <person name="Holmes M."/>
            <person name="Brinkac L.M."/>
            <person name="Beanan M.J."/>
            <person name="DeBoy R.T."/>
            <person name="Daugherty S.C."/>
            <person name="Kolonay J.F."/>
            <person name="Madupu R."/>
            <person name="Nelson W.C."/>
            <person name="White O."/>
            <person name="Peterson J.D."/>
            <person name="Khouri H.M."/>
            <person name="Hance I."/>
            <person name="Chris Lee P."/>
            <person name="Holtzapple E.K."/>
            <person name="Scanlan D."/>
            <person name="Tran K."/>
            <person name="Moazzez A."/>
            <person name="Utterback T.R."/>
            <person name="Rizzo M."/>
            <person name="Lee K."/>
            <person name="Kosack D."/>
            <person name="Moestl D."/>
            <person name="Wedler H."/>
            <person name="Lauber J."/>
            <person name="Stjepandic D."/>
            <person name="Hoheisel J."/>
            <person name="Straetz M."/>
            <person name="Heim S."/>
            <person name="Kiewitz C."/>
            <person name="Eisen J.A."/>
            <person name="Timmis K.N."/>
            <person name="Duesterhoeft A."/>
            <person name="Tuemmler B."/>
            <person name="Fraser C.M."/>
        </authorList>
    </citation>
    <scope>NUCLEOTIDE SEQUENCE [LARGE SCALE GENOMIC DNA]</scope>
    <source>
        <strain>ATCC 47054 / DSM 6125 / CFBP 8728 / NCIMB 11950 / KT2440</strain>
    </source>
</reference>
<reference key="2">
    <citation type="journal article" date="2013" name="J. Bacteriol.">
        <title>Amino acid racemization in Pseudomonas putida KT2440.</title>
        <authorList>
            <person name="Radkov A.D."/>
            <person name="Moe L.A."/>
        </authorList>
    </citation>
    <scope>FUNCTION</scope>
    <scope>CATALYTIC ACTIVITY</scope>
    <scope>SUBSTRATE SPECIFICITY</scope>
    <scope>BIOPHYSICOCHEMICAL PROPERTIES</scope>
    <source>
        <strain>ATCC 47054 / DSM 6125 / CFBP 8728 / NCIMB 11950 / KT2440</strain>
    </source>
</reference>